<proteinExistence type="inferred from homology"/>
<name>RNM5_MYCGE</name>
<dbReference type="EC" id="3.1.26.8"/>
<dbReference type="EMBL" id="L43967">
    <property type="protein sequence ID" value="AAC71274.1"/>
    <property type="molecule type" value="Genomic_DNA"/>
</dbReference>
<dbReference type="PIR" id="C64206">
    <property type="entry name" value="C64206"/>
</dbReference>
<dbReference type="RefSeq" id="WP_009885722.1">
    <property type="nucleotide sequence ID" value="NC_000908.2"/>
</dbReference>
<dbReference type="SMR" id="P47303"/>
<dbReference type="FunCoup" id="P47303">
    <property type="interactions" value="15"/>
</dbReference>
<dbReference type="STRING" id="243273.MG_057"/>
<dbReference type="GeneID" id="88282174"/>
<dbReference type="KEGG" id="mge:MG_057"/>
<dbReference type="eggNOG" id="COG1658">
    <property type="taxonomic scope" value="Bacteria"/>
</dbReference>
<dbReference type="HOGENOM" id="CLU_109405_1_0_14"/>
<dbReference type="InParanoid" id="P47303"/>
<dbReference type="OrthoDB" id="9791329at2"/>
<dbReference type="BioCyc" id="MGEN243273:G1GJ2-60-MONOMER"/>
<dbReference type="Proteomes" id="UP000000807">
    <property type="component" value="Chromosome"/>
</dbReference>
<dbReference type="GO" id="GO:0005737">
    <property type="term" value="C:cytoplasm"/>
    <property type="evidence" value="ECO:0007669"/>
    <property type="project" value="UniProtKB-SubCell"/>
</dbReference>
<dbReference type="GO" id="GO:0046872">
    <property type="term" value="F:metal ion binding"/>
    <property type="evidence" value="ECO:0007669"/>
    <property type="project" value="UniProtKB-KW"/>
</dbReference>
<dbReference type="GO" id="GO:0043822">
    <property type="term" value="F:ribonuclease M5 activity"/>
    <property type="evidence" value="ECO:0000318"/>
    <property type="project" value="GO_Central"/>
</dbReference>
<dbReference type="GO" id="GO:0019843">
    <property type="term" value="F:rRNA binding"/>
    <property type="evidence" value="ECO:0007669"/>
    <property type="project" value="UniProtKB-KW"/>
</dbReference>
<dbReference type="GO" id="GO:0006364">
    <property type="term" value="P:rRNA processing"/>
    <property type="evidence" value="ECO:0000318"/>
    <property type="project" value="GO_Central"/>
</dbReference>
<dbReference type="CDD" id="cd01027">
    <property type="entry name" value="TOPRIM_RNase_M5_like"/>
    <property type="match status" value="1"/>
</dbReference>
<dbReference type="Gene3D" id="3.40.1360.10">
    <property type="match status" value="1"/>
</dbReference>
<dbReference type="HAMAP" id="MF_01469">
    <property type="entry name" value="RNase_M5"/>
    <property type="match status" value="1"/>
</dbReference>
<dbReference type="InterPro" id="IPR004466">
    <property type="entry name" value="RNase_M5"/>
</dbReference>
<dbReference type="InterPro" id="IPR025156">
    <property type="entry name" value="RNase_M5_C"/>
</dbReference>
<dbReference type="InterPro" id="IPR006171">
    <property type="entry name" value="TOPRIM_dom"/>
</dbReference>
<dbReference type="InterPro" id="IPR034141">
    <property type="entry name" value="TOPRIM_RNase_M5-like"/>
</dbReference>
<dbReference type="NCBIfam" id="TIGR00334">
    <property type="entry name" value="5S_RNA_mat_M5"/>
    <property type="match status" value="1"/>
</dbReference>
<dbReference type="PANTHER" id="PTHR39156">
    <property type="entry name" value="RIBONUCLEASE M5"/>
    <property type="match status" value="1"/>
</dbReference>
<dbReference type="PANTHER" id="PTHR39156:SF1">
    <property type="entry name" value="RIBONUCLEASE M5"/>
    <property type="match status" value="1"/>
</dbReference>
<dbReference type="Pfam" id="PF13331">
    <property type="entry name" value="DUF4093"/>
    <property type="match status" value="1"/>
</dbReference>
<dbReference type="Pfam" id="PF01751">
    <property type="entry name" value="Toprim"/>
    <property type="match status" value="1"/>
</dbReference>
<dbReference type="SMART" id="SM00493">
    <property type="entry name" value="TOPRIM"/>
    <property type="match status" value="1"/>
</dbReference>
<dbReference type="SUPFAM" id="SSF110455">
    <property type="entry name" value="Toprim domain"/>
    <property type="match status" value="1"/>
</dbReference>
<dbReference type="PROSITE" id="PS50880">
    <property type="entry name" value="TOPRIM"/>
    <property type="match status" value="1"/>
</dbReference>
<sequence length="178" mass="20497">MDQKARIKIDGVIVCEGKTDQAKLQQIFDVDVITTNGSALKKETINLIKKISEKQTVILLLDPDQQGKKIRSKLEQHLTNYYNCYVDMNARLKNAKKAGIAEMETSALIAALNNRVAITKNANQSILWDQYLSLKLNDKKKRLLLCNNLNLPYFNHKQLFKKLNLLNLTFQDVWKHLK</sequence>
<gene>
    <name type="primary">rnmV</name>
    <name type="ordered locus">MG057</name>
</gene>
<keyword id="KW-0963">Cytoplasm</keyword>
<keyword id="KW-0255">Endonuclease</keyword>
<keyword id="KW-0378">Hydrolase</keyword>
<keyword id="KW-0460">Magnesium</keyword>
<keyword id="KW-0479">Metal-binding</keyword>
<keyword id="KW-0540">Nuclease</keyword>
<keyword id="KW-1185">Reference proteome</keyword>
<keyword id="KW-0690">Ribosome biogenesis</keyword>
<keyword id="KW-0694">RNA-binding</keyword>
<keyword id="KW-0698">rRNA processing</keyword>
<keyword id="KW-0699">rRNA-binding</keyword>
<organism>
    <name type="scientific">Mycoplasma genitalium (strain ATCC 33530 / DSM 19775 / NCTC 10195 / G37)</name>
    <name type="common">Mycoplasmoides genitalium</name>
    <dbReference type="NCBI Taxonomy" id="243273"/>
    <lineage>
        <taxon>Bacteria</taxon>
        <taxon>Bacillati</taxon>
        <taxon>Mycoplasmatota</taxon>
        <taxon>Mycoplasmoidales</taxon>
        <taxon>Mycoplasmoidaceae</taxon>
        <taxon>Mycoplasmoides</taxon>
    </lineage>
</organism>
<feature type="chain" id="PRO_0000210401" description="Ribonuclease M5">
    <location>
        <begin position="1"/>
        <end position="178"/>
    </location>
</feature>
<feature type="domain" description="Toprim" evidence="2">
    <location>
        <begin position="10"/>
        <end position="94"/>
    </location>
</feature>
<feature type="binding site" evidence="2">
    <location>
        <position position="16"/>
    </location>
    <ligand>
        <name>Mg(2+)</name>
        <dbReference type="ChEBI" id="CHEBI:18420"/>
        <label>1</label>
        <note>catalytic</note>
    </ligand>
</feature>
<feature type="binding site" evidence="2">
    <location>
        <position position="62"/>
    </location>
    <ligand>
        <name>Mg(2+)</name>
        <dbReference type="ChEBI" id="CHEBI:18420"/>
        <label>1</label>
        <note>catalytic</note>
    </ligand>
</feature>
<feature type="binding site" evidence="2">
    <location>
        <position position="62"/>
    </location>
    <ligand>
        <name>Mg(2+)</name>
        <dbReference type="ChEBI" id="CHEBI:18420"/>
        <label>2</label>
    </ligand>
</feature>
<feature type="binding site" evidence="2">
    <location>
        <position position="64"/>
    </location>
    <ligand>
        <name>Mg(2+)</name>
        <dbReference type="ChEBI" id="CHEBI:18420"/>
        <label>2</label>
    </ligand>
</feature>
<reference key="1">
    <citation type="journal article" date="1995" name="Science">
        <title>The minimal gene complement of Mycoplasma genitalium.</title>
        <authorList>
            <person name="Fraser C.M."/>
            <person name="Gocayne J.D."/>
            <person name="White O."/>
            <person name="Adams M.D."/>
            <person name="Clayton R.A."/>
            <person name="Fleischmann R.D."/>
            <person name="Bult C.J."/>
            <person name="Kerlavage A.R."/>
            <person name="Sutton G.G."/>
            <person name="Kelley J.M."/>
            <person name="Fritchman J.L."/>
            <person name="Weidman J.F."/>
            <person name="Small K.V."/>
            <person name="Sandusky M."/>
            <person name="Fuhrmann J.L."/>
            <person name="Nguyen D.T."/>
            <person name="Utterback T.R."/>
            <person name="Saudek D.M."/>
            <person name="Phillips C.A."/>
            <person name="Merrick J.M."/>
            <person name="Tomb J.-F."/>
            <person name="Dougherty B.A."/>
            <person name="Bott K.F."/>
            <person name="Hu P.-C."/>
            <person name="Lucier T.S."/>
            <person name="Peterson S.N."/>
            <person name="Smith H.O."/>
            <person name="Hutchison C.A. III"/>
            <person name="Venter J.C."/>
        </authorList>
    </citation>
    <scope>NUCLEOTIDE SEQUENCE [LARGE SCALE GENOMIC DNA]</scope>
    <source>
        <strain>ATCC 33530 / DSM 19775 / NCTC 10195 / G37</strain>
    </source>
</reference>
<protein>
    <recommendedName>
        <fullName>Ribonuclease M5</fullName>
        <ecNumber>3.1.26.8</ecNumber>
    </recommendedName>
    <alternativeName>
        <fullName>RNase M5</fullName>
    </alternativeName>
    <alternativeName>
        <fullName>Ribosomal RNA terminal maturase M5</fullName>
    </alternativeName>
</protein>
<accession>P47303</accession>
<evidence type="ECO:0000250" key="1"/>
<evidence type="ECO:0000255" key="2">
    <source>
        <dbReference type="PROSITE-ProRule" id="PRU00995"/>
    </source>
</evidence>
<evidence type="ECO:0000305" key="3"/>
<comment type="function">
    <text evidence="1">Required for correct processing of both the 5' and 3' ends of 5S rRNA precursor. Cleaves both sides of a double-stranded region yielding mature 5S rRNA in one step (By similarity).</text>
</comment>
<comment type="catalytic activity">
    <reaction>
        <text>Endonucleolytic cleavage of RNA, removing 21 and 42 nucleotides, respectively, from the 5'- and 3'-termini of a 5S-rRNA precursor.</text>
        <dbReference type="EC" id="3.1.26.8"/>
    </reaction>
</comment>
<comment type="cofactor">
    <cofactor evidence="2">
        <name>Mg(2+)</name>
        <dbReference type="ChEBI" id="CHEBI:18420"/>
    </cofactor>
    <text evidence="2">Binds two Mg(2+) per subunit.</text>
</comment>
<comment type="subcellular location">
    <subcellularLocation>
        <location evidence="1">Cytoplasm</location>
    </subcellularLocation>
</comment>
<comment type="similarity">
    <text evidence="3">Belongs to the ribonuclease M5 family.</text>
</comment>